<organism>
    <name type="scientific">Dama dama</name>
    <name type="common">Fallow deer</name>
    <name type="synonym">Cervus dama</name>
    <dbReference type="NCBI Taxonomy" id="30532"/>
    <lineage>
        <taxon>Eukaryota</taxon>
        <taxon>Metazoa</taxon>
        <taxon>Chordata</taxon>
        <taxon>Craniata</taxon>
        <taxon>Vertebrata</taxon>
        <taxon>Euteleostomi</taxon>
        <taxon>Mammalia</taxon>
        <taxon>Eutheria</taxon>
        <taxon>Laurasiatheria</taxon>
        <taxon>Artiodactyla</taxon>
        <taxon>Ruminantia</taxon>
        <taxon>Pecora</taxon>
        <taxon>Cervidae</taxon>
        <taxon>Cervinae</taxon>
        <taxon>Dama</taxon>
    </lineage>
</organism>
<dbReference type="GO" id="GO:0005576">
    <property type="term" value="C:extracellular region"/>
    <property type="evidence" value="ECO:0007669"/>
    <property type="project" value="UniProtKB-SubCell"/>
</dbReference>
<dbReference type="GO" id="GO:0004190">
    <property type="term" value="F:aspartic-type endopeptidase activity"/>
    <property type="evidence" value="ECO:0007669"/>
    <property type="project" value="UniProtKB-KW"/>
</dbReference>
<dbReference type="GO" id="GO:0006508">
    <property type="term" value="P:proteolysis"/>
    <property type="evidence" value="ECO:0007669"/>
    <property type="project" value="UniProtKB-KW"/>
</dbReference>
<keyword id="KW-0064">Aspartyl protease</keyword>
<keyword id="KW-0903">Direct protein sequencing</keyword>
<keyword id="KW-0378">Hydrolase</keyword>
<keyword id="KW-0645">Protease</keyword>
<keyword id="KW-0964">Secreted</keyword>
<proteinExistence type="evidence at protein level"/>
<reference evidence="5" key="1">
    <citation type="journal article" date="2014" name="Acta Vet. Scand.">
        <title>Identification of pregnancy-associated glycoproteins and alpha-fetoprotein in fallow deer (Dama dama) placenta.</title>
        <authorList>
            <person name="Beriot M."/>
            <person name="Tchimbou A.F."/>
            <person name="Barbato O."/>
            <person name="Beckers J.F."/>
            <person name="de Sousa N.M."/>
        </authorList>
    </citation>
    <scope>PROTEIN SEQUENCE</scope>
    <scope>TISSUE SPECIFICITY</scope>
    <source>
        <tissue evidence="4">Placenta</tissue>
    </source>
</reference>
<feature type="chain" id="PRO_0000423393" description="Pregnancy-associated glycoprotein 56D" evidence="3">
    <location>
        <begin position="1"/>
        <end position="11" status="greater than"/>
    </location>
</feature>
<feature type="non-terminal residue" evidence="4">
    <location>
        <position position="11"/>
    </location>
</feature>
<comment type="subcellular location">
    <subcellularLocation>
        <location evidence="1">Secreted</location>
        <location evidence="1">Extracellular space</location>
    </subcellularLocation>
</comment>
<comment type="tissue specificity">
    <text evidence="3">Expressed in placenta, specifically the maternal caruncula tissue (MCT) (at protein level).</text>
</comment>
<comment type="similarity">
    <text evidence="2">Belongs to the peptidase A1 family.</text>
</comment>
<accession>C0HJD0</accession>
<name>PA56D_DAMDA</name>
<protein>
    <recommendedName>
        <fullName evidence="4">Pregnancy-associated glycoprotein 56D</fullName>
        <shortName evidence="4">FdPAG56D</shortName>
    </recommendedName>
</protein>
<sequence>SLRKMHALGET</sequence>
<evidence type="ECO:0000250" key="1">
    <source>
        <dbReference type="UniProtKB" id="Q29432"/>
    </source>
</evidence>
<evidence type="ECO:0000255" key="2"/>
<evidence type="ECO:0000269" key="3">
    <source>
    </source>
</evidence>
<evidence type="ECO:0000303" key="4">
    <source>
    </source>
</evidence>
<evidence type="ECO:0000305" key="5"/>